<name>RTEL1_DROER</name>
<feature type="chain" id="PRO_0000370621" description="Regulator of telomere elongation helicase 1 homolog">
    <location>
        <begin position="1"/>
        <end position="985"/>
    </location>
</feature>
<feature type="domain" description="Helicase ATP-binding" evidence="2">
    <location>
        <begin position="7"/>
        <end position="303"/>
    </location>
</feature>
<feature type="short sequence motif" description="DEAH box">
    <location>
        <begin position="252"/>
        <end position="255"/>
    </location>
</feature>
<feature type="binding site" evidence="2">
    <location>
        <begin position="42"/>
        <end position="49"/>
    </location>
    <ligand>
        <name>ATP</name>
        <dbReference type="ChEBI" id="CHEBI:30616"/>
    </ligand>
</feature>
<feature type="binding site" evidence="2">
    <location>
        <position position="146"/>
    </location>
    <ligand>
        <name>[4Fe-4S] cluster</name>
        <dbReference type="ChEBI" id="CHEBI:49883"/>
    </ligand>
</feature>
<feature type="binding site" evidence="2">
    <location>
        <position position="164"/>
    </location>
    <ligand>
        <name>[4Fe-4S] cluster</name>
        <dbReference type="ChEBI" id="CHEBI:49883"/>
    </ligand>
</feature>
<feature type="binding site" evidence="2">
    <location>
        <position position="173"/>
    </location>
    <ligand>
        <name>[4Fe-4S] cluster</name>
        <dbReference type="ChEBI" id="CHEBI:49883"/>
    </ligand>
</feature>
<feature type="binding site" evidence="2">
    <location>
        <position position="209"/>
    </location>
    <ligand>
        <name>[4Fe-4S] cluster</name>
        <dbReference type="ChEBI" id="CHEBI:49883"/>
    </ligand>
</feature>
<feature type="modified residue" description="Phosphothreonine" evidence="1">
    <location>
        <position position="874"/>
    </location>
</feature>
<proteinExistence type="inferred from homology"/>
<sequence>MPESLIAGIPVHFPFEPYPVQRAYMEKVIQCLRDGTNGVLESPTGTGKTLSLLCSSLAWIRTRQSEHQQQMVKIEKADFSGLAGGATGGELSDLGKTMGRANNWGVPKVIYASRTHSQLTQAMRELKRTAYANMRSVVLGSRDQLCIHPEVMREQGNSNKTNMCKLRVHSKTCTFQMRVESRKDHPDLRGPSIMDIEDLVKVGQRLKICPYFASRELVPQADITFMPYNYLLDPKARKANKIELGNTIVILDEAHNIEKICEESASVQIKSSDVAMAIEDVTHIMQVFASGESQDMAGDEPKDFTLDDLTLLKEMLLELEKAIDAVVVDNAAEGTTFPASLMYELLGKANFTYGNVATIVSLLDKLVQYLLVASQQMSIRKGGTFTMLSDLLTIVFANKQDVMSKVYASFKVHVQMEESKQGHGKQQGAKQQGGWLGKGTIAAASGTSKVAKIINFWCFNPGFGMEQLLNTQVRSVILTSGTLAPLKPLIAELAIPVAQHLENPHIVDQSQVYVKIIGTGPDRQQLISNYANRDNPKYISSLGQTILNVSRIVPDGLLVFFPSYPMLNKCVDAWQASGLWADISCKKPIFLEPRSKDQFTSTMEEFYQAIRDSKGAVFMAVCRGKVSEGLDFADRNGRAVIITGLPFPPLKDPKVILKRRYLEANRTRENQLLSGQEWYNLDATRAVNQAIGRVIRHRNDYGAILLCDSRFKDASQVQQLSKWIRGHLGDRPQCSPFGPIVRELRQFFKNAEANMKLPDERETDAPLETVCKTEDEPLAAIPKLKREPGSNATFKSANESAIKVEMANSIKTWTPADYASAAGRKLGGAAPSAMDFMSRLDSNVSSIDFNCCTDSKSGSSDLVKIHKRERSSPTLPESSSQVSKKRYKLVENIKVEPSSSQAKAAPEERADFLRALRSLVTQDQFRRFGKALLEYKNGTYESFQDLMAILLDVLSAPKVRYMLVGMRKYLKNEHKDEFDRRVGSL</sequence>
<dbReference type="EC" id="5.6.2.-" evidence="2"/>
<dbReference type="EMBL" id="CH954180">
    <property type="protein sequence ID" value="EDV45930.1"/>
    <property type="molecule type" value="Genomic_DNA"/>
</dbReference>
<dbReference type="SMR" id="B3NSW1"/>
<dbReference type="EnsemblMetazoa" id="FBtr0138834">
    <property type="protein sequence ID" value="FBpp0137326"/>
    <property type="gene ID" value="FBgn0110988"/>
</dbReference>
<dbReference type="EnsemblMetazoa" id="XM_001976967.3">
    <property type="protein sequence ID" value="XP_001977003.1"/>
    <property type="gene ID" value="LOC6550838"/>
</dbReference>
<dbReference type="GeneID" id="6550838"/>
<dbReference type="KEGG" id="der:6550838"/>
<dbReference type="CTD" id="51750"/>
<dbReference type="eggNOG" id="KOG1132">
    <property type="taxonomic scope" value="Eukaryota"/>
</dbReference>
<dbReference type="HOGENOM" id="CLU_006515_4_0_1"/>
<dbReference type="OMA" id="NCATIVA"/>
<dbReference type="OrthoDB" id="19182at2759"/>
<dbReference type="PhylomeDB" id="B3NSW1"/>
<dbReference type="Proteomes" id="UP000008711">
    <property type="component" value="Unassembled WGS sequence"/>
</dbReference>
<dbReference type="GO" id="GO:0005634">
    <property type="term" value="C:nucleus"/>
    <property type="evidence" value="ECO:0000250"/>
    <property type="project" value="UniProtKB"/>
</dbReference>
<dbReference type="GO" id="GO:0051539">
    <property type="term" value="F:4 iron, 4 sulfur cluster binding"/>
    <property type="evidence" value="ECO:0007669"/>
    <property type="project" value="UniProtKB-UniRule"/>
</dbReference>
<dbReference type="GO" id="GO:0005524">
    <property type="term" value="F:ATP binding"/>
    <property type="evidence" value="ECO:0000250"/>
    <property type="project" value="UniProtKB"/>
</dbReference>
<dbReference type="GO" id="GO:0016887">
    <property type="term" value="F:ATP hydrolysis activity"/>
    <property type="evidence" value="ECO:0007669"/>
    <property type="project" value="RHEA"/>
</dbReference>
<dbReference type="GO" id="GO:0003682">
    <property type="term" value="F:chromatin binding"/>
    <property type="evidence" value="ECO:0007669"/>
    <property type="project" value="EnsemblMetazoa"/>
</dbReference>
<dbReference type="GO" id="GO:0003677">
    <property type="term" value="F:DNA binding"/>
    <property type="evidence" value="ECO:0007669"/>
    <property type="project" value="UniProtKB-UniRule"/>
</dbReference>
<dbReference type="GO" id="GO:0003678">
    <property type="term" value="F:DNA helicase activity"/>
    <property type="evidence" value="ECO:0000250"/>
    <property type="project" value="UniProtKB"/>
</dbReference>
<dbReference type="GO" id="GO:0070182">
    <property type="term" value="F:DNA polymerase binding"/>
    <property type="evidence" value="ECO:0007669"/>
    <property type="project" value="TreeGrafter"/>
</dbReference>
<dbReference type="GO" id="GO:0046872">
    <property type="term" value="F:metal ion binding"/>
    <property type="evidence" value="ECO:0007669"/>
    <property type="project" value="UniProtKB-UniRule"/>
</dbReference>
<dbReference type="GO" id="GO:0006310">
    <property type="term" value="P:DNA recombination"/>
    <property type="evidence" value="ECO:0007669"/>
    <property type="project" value="InterPro"/>
</dbReference>
<dbReference type="GO" id="GO:0006281">
    <property type="term" value="P:DNA repair"/>
    <property type="evidence" value="ECO:0007669"/>
    <property type="project" value="UniProtKB-UniRule"/>
</dbReference>
<dbReference type="GO" id="GO:0006260">
    <property type="term" value="P:DNA replication"/>
    <property type="evidence" value="ECO:0007669"/>
    <property type="project" value="InterPro"/>
</dbReference>
<dbReference type="GO" id="GO:0036098">
    <property type="term" value="P:male germ-line stem cell population maintenance"/>
    <property type="evidence" value="ECO:0007669"/>
    <property type="project" value="EnsemblMetazoa"/>
</dbReference>
<dbReference type="GO" id="GO:0045910">
    <property type="term" value="P:negative regulation of DNA recombination"/>
    <property type="evidence" value="ECO:0007669"/>
    <property type="project" value="TreeGrafter"/>
</dbReference>
<dbReference type="GO" id="GO:1904430">
    <property type="term" value="P:negative regulation of t-circle formation"/>
    <property type="evidence" value="ECO:0007669"/>
    <property type="project" value="TreeGrafter"/>
</dbReference>
<dbReference type="GO" id="GO:0010569">
    <property type="term" value="P:regulation of double-strand break repair via homologous recombination"/>
    <property type="evidence" value="ECO:0000250"/>
    <property type="project" value="UniProtKB"/>
</dbReference>
<dbReference type="GO" id="GO:0090657">
    <property type="term" value="P:telomeric loop disassembly"/>
    <property type="evidence" value="ECO:0007669"/>
    <property type="project" value="TreeGrafter"/>
</dbReference>
<dbReference type="CDD" id="cd17970">
    <property type="entry name" value="DEAHc_FancJ"/>
    <property type="match status" value="1"/>
</dbReference>
<dbReference type="CDD" id="cd13932">
    <property type="entry name" value="HN_RTEL1"/>
    <property type="match status" value="1"/>
</dbReference>
<dbReference type="CDD" id="cd18788">
    <property type="entry name" value="SF2_C_XPD"/>
    <property type="match status" value="1"/>
</dbReference>
<dbReference type="FunFam" id="3.40.50.300:FF:000431">
    <property type="entry name" value="Regulator of telomere elongation helicase 1"/>
    <property type="match status" value="1"/>
</dbReference>
<dbReference type="FunFam" id="1.20.1160.20:FF:000011">
    <property type="entry name" value="Regulator of telomere elongation helicase 1 homolog"/>
    <property type="match status" value="1"/>
</dbReference>
<dbReference type="Gene3D" id="1.20.1160.20">
    <property type="match status" value="1"/>
</dbReference>
<dbReference type="Gene3D" id="3.40.50.300">
    <property type="entry name" value="P-loop containing nucleotide triphosphate hydrolases"/>
    <property type="match status" value="2"/>
</dbReference>
<dbReference type="HAMAP" id="MF_03065">
    <property type="entry name" value="RTEL1"/>
    <property type="match status" value="1"/>
</dbReference>
<dbReference type="InterPro" id="IPR006555">
    <property type="entry name" value="ATP-dep_Helicase_C"/>
</dbReference>
<dbReference type="InterPro" id="IPR045028">
    <property type="entry name" value="DinG/Rad3-like"/>
</dbReference>
<dbReference type="InterPro" id="IPR014013">
    <property type="entry name" value="Helic_SF1/SF2_ATP-bd_DinG/Rad3"/>
</dbReference>
<dbReference type="InterPro" id="IPR006554">
    <property type="entry name" value="Helicase-like_DEXD_c2"/>
</dbReference>
<dbReference type="InterPro" id="IPR049909">
    <property type="entry name" value="HHD_RTEL1"/>
</dbReference>
<dbReference type="InterPro" id="IPR027417">
    <property type="entry name" value="P-loop_NTPase"/>
</dbReference>
<dbReference type="InterPro" id="IPR010614">
    <property type="entry name" value="RAD3-like_helicase_DEAD"/>
</dbReference>
<dbReference type="InterPro" id="IPR013020">
    <property type="entry name" value="Rad3/Chl1-like"/>
</dbReference>
<dbReference type="InterPro" id="IPR030845">
    <property type="entry name" value="RTEL1"/>
</dbReference>
<dbReference type="NCBIfam" id="TIGR00604">
    <property type="entry name" value="rad3"/>
    <property type="match status" value="1"/>
</dbReference>
<dbReference type="PANTHER" id="PTHR11472">
    <property type="entry name" value="DNA REPAIR DEAD HELICASE RAD3/XP-D SUBFAMILY MEMBER"/>
    <property type="match status" value="1"/>
</dbReference>
<dbReference type="PANTHER" id="PTHR11472:SF34">
    <property type="entry name" value="REGULATOR OF TELOMERE ELONGATION HELICASE 1"/>
    <property type="match status" value="1"/>
</dbReference>
<dbReference type="Pfam" id="PF23109">
    <property type="entry name" value="ARCH_RTEL1"/>
    <property type="match status" value="1"/>
</dbReference>
<dbReference type="Pfam" id="PF06733">
    <property type="entry name" value="DEAD_2"/>
    <property type="match status" value="1"/>
</dbReference>
<dbReference type="Pfam" id="PF13307">
    <property type="entry name" value="Helicase_C_2"/>
    <property type="match status" value="1"/>
</dbReference>
<dbReference type="SMART" id="SM00488">
    <property type="entry name" value="DEXDc2"/>
    <property type="match status" value="1"/>
</dbReference>
<dbReference type="SMART" id="SM00491">
    <property type="entry name" value="HELICc2"/>
    <property type="match status" value="1"/>
</dbReference>
<dbReference type="SUPFAM" id="SSF52540">
    <property type="entry name" value="P-loop containing nucleoside triphosphate hydrolases"/>
    <property type="match status" value="2"/>
</dbReference>
<dbReference type="PROSITE" id="PS51193">
    <property type="entry name" value="HELICASE_ATP_BIND_2"/>
    <property type="match status" value="1"/>
</dbReference>
<comment type="function">
    <text evidence="2">A probable ATP-dependent DNA helicase implicated in DNA repair and the maintenance of genomic stability. Acts as an anti-recombinase to counteract toxic recombination and limit crossover during meiosis. Regulates meiotic recombination and crossover homeostasis by physically dissociating strand invasion events and thereby promotes noncrossover repair by meiotic synthesis dependent strand annealing (SDSA) as well as disassembly of D loop recombination intermediates.</text>
</comment>
<comment type="catalytic activity">
    <reaction evidence="2">
        <text>ATP + H2O = ADP + phosphate + H(+)</text>
        <dbReference type="Rhea" id="RHEA:13065"/>
        <dbReference type="ChEBI" id="CHEBI:15377"/>
        <dbReference type="ChEBI" id="CHEBI:15378"/>
        <dbReference type="ChEBI" id="CHEBI:30616"/>
        <dbReference type="ChEBI" id="CHEBI:43474"/>
        <dbReference type="ChEBI" id="CHEBI:456216"/>
    </reaction>
</comment>
<comment type="subcellular location">
    <subcellularLocation>
        <location evidence="2">Nucleus</location>
    </subcellularLocation>
</comment>
<comment type="similarity">
    <text evidence="2">Belongs to the helicase family. RAD3/XPD subfamily.</text>
</comment>
<gene>
    <name type="ORF">GG18780</name>
</gene>
<organism>
    <name type="scientific">Drosophila erecta</name>
    <name type="common">Fruit fly</name>
    <dbReference type="NCBI Taxonomy" id="7220"/>
    <lineage>
        <taxon>Eukaryota</taxon>
        <taxon>Metazoa</taxon>
        <taxon>Ecdysozoa</taxon>
        <taxon>Arthropoda</taxon>
        <taxon>Hexapoda</taxon>
        <taxon>Insecta</taxon>
        <taxon>Pterygota</taxon>
        <taxon>Neoptera</taxon>
        <taxon>Endopterygota</taxon>
        <taxon>Diptera</taxon>
        <taxon>Brachycera</taxon>
        <taxon>Muscomorpha</taxon>
        <taxon>Ephydroidea</taxon>
        <taxon>Drosophilidae</taxon>
        <taxon>Drosophila</taxon>
        <taxon>Sophophora</taxon>
    </lineage>
</organism>
<reference key="1">
    <citation type="journal article" date="2007" name="Nature">
        <title>Evolution of genes and genomes on the Drosophila phylogeny.</title>
        <authorList>
            <consortium name="Drosophila 12 genomes consortium"/>
        </authorList>
    </citation>
    <scope>NUCLEOTIDE SEQUENCE [LARGE SCALE GENOMIC DNA]</scope>
    <source>
        <strain>Tucson 14021-0224.01</strain>
    </source>
</reference>
<accession>B3NSW1</accession>
<protein>
    <recommendedName>
        <fullName evidence="2">Regulator of telomere elongation helicase 1 homolog</fullName>
        <ecNumber evidence="2">5.6.2.-</ecNumber>
    </recommendedName>
</protein>
<evidence type="ECO:0000250" key="1"/>
<evidence type="ECO:0000255" key="2">
    <source>
        <dbReference type="HAMAP-Rule" id="MF_03065"/>
    </source>
</evidence>
<keyword id="KW-0004">4Fe-4S</keyword>
<keyword id="KW-0067">ATP-binding</keyword>
<keyword id="KW-0227">DNA damage</keyword>
<keyword id="KW-0234">DNA repair</keyword>
<keyword id="KW-0238">DNA-binding</keyword>
<keyword id="KW-0347">Helicase</keyword>
<keyword id="KW-0378">Hydrolase</keyword>
<keyword id="KW-0408">Iron</keyword>
<keyword id="KW-0411">Iron-sulfur</keyword>
<keyword id="KW-0413">Isomerase</keyword>
<keyword id="KW-0479">Metal-binding</keyword>
<keyword id="KW-0547">Nucleotide-binding</keyword>
<keyword id="KW-0539">Nucleus</keyword>
<keyword id="KW-0597">Phosphoprotein</keyword>